<accession>Q17693</accession>
<accession>G8JXY2</accession>
<name>MTHR_CAEEL</name>
<proteinExistence type="inferred from homology"/>
<feature type="chain" id="PRO_0000190248" description="Probable methylenetetrahydrofolate reductase (NADPH)">
    <location>
        <begin position="1"/>
        <end position="663"/>
    </location>
</feature>
<feature type="active site" description="Proton donor/acceptor" evidence="1">
    <location>
        <position position="76"/>
    </location>
</feature>
<feature type="binding site" evidence="1">
    <location>
        <begin position="76"/>
        <end position="81"/>
    </location>
    <ligand>
        <name>NAD(+)</name>
        <dbReference type="ChEBI" id="CHEBI:57540"/>
    </ligand>
</feature>
<feature type="binding site" evidence="2">
    <location>
        <begin position="107"/>
        <end position="108"/>
    </location>
    <ligand>
        <name>FAD</name>
        <dbReference type="ChEBI" id="CHEBI:57692"/>
    </ligand>
</feature>
<feature type="binding site" evidence="1">
    <location>
        <begin position="107"/>
        <end position="108"/>
    </location>
    <ligand>
        <name>NAD(+)</name>
        <dbReference type="ChEBI" id="CHEBI:57540"/>
    </ligand>
</feature>
<feature type="binding site" evidence="2">
    <location>
        <position position="141"/>
    </location>
    <ligand>
        <name>FAD</name>
        <dbReference type="ChEBI" id="CHEBI:57692"/>
    </ligand>
</feature>
<feature type="binding site" evidence="2">
    <location>
        <begin position="171"/>
        <end position="173"/>
    </location>
    <ligand>
        <name>FAD</name>
        <dbReference type="ChEBI" id="CHEBI:57692"/>
    </ligand>
</feature>
<feature type="binding site" evidence="1">
    <location>
        <position position="173"/>
    </location>
    <ligand>
        <name>substrate</name>
    </ligand>
</feature>
<feature type="binding site" evidence="2">
    <location>
        <begin position="187"/>
        <end position="188"/>
    </location>
    <ligand>
        <name>FAD</name>
        <dbReference type="ChEBI" id="CHEBI:57692"/>
    </ligand>
</feature>
<feature type="binding site" evidence="2">
    <location>
        <position position="210"/>
    </location>
    <ligand>
        <name>FAD</name>
        <dbReference type="ChEBI" id="CHEBI:57692"/>
    </ligand>
</feature>
<feature type="binding site" evidence="2">
    <location>
        <begin position="214"/>
        <end position="217"/>
    </location>
    <ligand>
        <name>FAD</name>
        <dbReference type="ChEBI" id="CHEBI:57692"/>
    </ligand>
</feature>
<feature type="binding site" evidence="2">
    <location>
        <position position="223"/>
    </location>
    <ligand>
        <name>FAD</name>
        <dbReference type="ChEBI" id="CHEBI:57692"/>
    </ligand>
</feature>
<feature type="binding site" evidence="2">
    <location>
        <position position="230"/>
    </location>
    <ligand>
        <name>FAD</name>
        <dbReference type="ChEBI" id="CHEBI:57692"/>
    </ligand>
</feature>
<feature type="binding site" evidence="1">
    <location>
        <position position="241"/>
    </location>
    <ligand>
        <name>substrate</name>
    </ligand>
</feature>
<feature type="binding site" evidence="1">
    <location>
        <position position="334"/>
    </location>
    <ligand>
        <name>substrate</name>
    </ligand>
</feature>
<feature type="binding site" evidence="1">
    <location>
        <position position="338"/>
    </location>
    <ligand>
        <name>substrate</name>
    </ligand>
</feature>
<feature type="binding site" evidence="2">
    <location>
        <begin position="477"/>
        <end position="480"/>
    </location>
    <ligand>
        <name>S-adenosyl-L-methionine</name>
        <dbReference type="ChEBI" id="CHEBI:59789"/>
    </ligand>
</feature>
<feature type="binding site" evidence="2">
    <location>
        <begin position="497"/>
        <end position="501"/>
    </location>
    <ligand>
        <name>S-adenosyl-L-methionine</name>
        <dbReference type="ChEBI" id="CHEBI:59789"/>
    </ligand>
</feature>
<feature type="binding site" evidence="2">
    <location>
        <position position="578"/>
    </location>
    <ligand>
        <name>S-adenosyl-L-methionine</name>
        <dbReference type="ChEBI" id="CHEBI:59789"/>
    </ligand>
</feature>
<feature type="binding site" evidence="2">
    <location>
        <position position="591"/>
    </location>
    <ligand>
        <name>S-adenosyl-L-methionine</name>
        <dbReference type="ChEBI" id="CHEBI:59789"/>
    </ligand>
</feature>
<feature type="modified residue" description="Phosphothreonine" evidence="2">
    <location>
        <position position="107"/>
    </location>
</feature>
<feature type="modified residue" description="Phosphoserine" evidence="2">
    <location>
        <position position="408"/>
    </location>
</feature>
<feature type="modified residue" description="Phosphothreonine" evidence="2">
    <location>
        <position position="465"/>
    </location>
</feature>
<feature type="splice variant" id="VSP_057655" description="In isoform b." evidence="3">
    <original>MTNTGETKVIESHGTIKKIDSLSTMPYC</original>
    <variation>MAVLSKN</variation>
    <location>
        <begin position="1"/>
        <end position="28"/>
    </location>
</feature>
<evidence type="ECO:0000250" key="1"/>
<evidence type="ECO:0000250" key="2">
    <source>
        <dbReference type="UniProtKB" id="P42898"/>
    </source>
</evidence>
<evidence type="ECO:0000305" key="3"/>
<evidence type="ECO:0000312" key="4">
    <source>
        <dbReference type="WormBase" id="C06A8.1a"/>
    </source>
</evidence>
<evidence type="ECO:0000312" key="5">
    <source>
        <dbReference type="WormBase" id="C06A8.1b"/>
    </source>
</evidence>
<dbReference type="EC" id="1.5.1.53" evidence="2"/>
<dbReference type="EMBL" id="FO080131">
    <property type="protein sequence ID" value="CCD61458.1"/>
    <property type="molecule type" value="Genomic_DNA"/>
</dbReference>
<dbReference type="EMBL" id="FO080131">
    <property type="protein sequence ID" value="CCD61459.1"/>
    <property type="molecule type" value="Genomic_DNA"/>
</dbReference>
<dbReference type="PIR" id="T15423">
    <property type="entry name" value="T15423"/>
</dbReference>
<dbReference type="RefSeq" id="NP_741027.1">
    <molecule id="Q17693-1"/>
    <property type="nucleotide sequence ID" value="NM_171024.7"/>
</dbReference>
<dbReference type="RefSeq" id="NP_741028.1">
    <molecule id="Q17693-2"/>
    <property type="nucleotide sequence ID" value="NM_171025.9"/>
</dbReference>
<dbReference type="SMR" id="Q17693"/>
<dbReference type="BioGRID" id="39587">
    <property type="interactions" value="9"/>
</dbReference>
<dbReference type="DIP" id="DIP-26125N"/>
<dbReference type="FunCoup" id="Q17693">
    <property type="interactions" value="1183"/>
</dbReference>
<dbReference type="IntAct" id="Q17693">
    <property type="interactions" value="3"/>
</dbReference>
<dbReference type="STRING" id="6239.C06A8.1a.2"/>
<dbReference type="iPTMnet" id="Q17693"/>
<dbReference type="PaxDb" id="6239-C06A8.1a"/>
<dbReference type="PeptideAtlas" id="Q17693"/>
<dbReference type="EnsemblMetazoa" id="C06A8.1a.1">
    <molecule id="Q17693-1"/>
    <property type="protein sequence ID" value="C06A8.1a.1"/>
    <property type="gene ID" value="WBGene00015512"/>
</dbReference>
<dbReference type="EnsemblMetazoa" id="C06A8.1b.1">
    <molecule id="Q17693-2"/>
    <property type="protein sequence ID" value="C06A8.1b.1"/>
    <property type="gene ID" value="WBGene00015512"/>
</dbReference>
<dbReference type="EnsemblMetazoa" id="C06A8.1b.2">
    <molecule id="Q17693-2"/>
    <property type="protein sequence ID" value="C06A8.1b.2"/>
    <property type="gene ID" value="WBGene00015512"/>
</dbReference>
<dbReference type="GeneID" id="174254"/>
<dbReference type="KEGG" id="cel:CELE_C06A8.1"/>
<dbReference type="UCSC" id="C06A8.1a.1">
    <molecule id="Q17693-1"/>
    <property type="organism name" value="c. elegans"/>
</dbReference>
<dbReference type="AGR" id="WB:WBGene00015512"/>
<dbReference type="CTD" id="174254"/>
<dbReference type="WormBase" id="C06A8.1a">
    <molecule id="Q17693-1"/>
    <property type="protein sequence ID" value="CE30593"/>
    <property type="gene ID" value="WBGene00015512"/>
    <property type="gene designation" value="mthf-1"/>
</dbReference>
<dbReference type="WormBase" id="C06A8.1b">
    <molecule id="Q17693-2"/>
    <property type="protein sequence ID" value="CE31291"/>
    <property type="gene ID" value="WBGene00015512"/>
    <property type="gene designation" value="mthf-1"/>
</dbReference>
<dbReference type="eggNOG" id="KOG0564">
    <property type="taxonomic scope" value="Eukaryota"/>
</dbReference>
<dbReference type="GeneTree" id="ENSGT00390000012490"/>
<dbReference type="InParanoid" id="Q17693"/>
<dbReference type="OMA" id="AWKEEFY"/>
<dbReference type="OrthoDB" id="16284at2759"/>
<dbReference type="PhylomeDB" id="Q17693"/>
<dbReference type="BRENDA" id="1.5.1.20">
    <property type="organism ID" value="1045"/>
</dbReference>
<dbReference type="Reactome" id="R-CEL-196757">
    <property type="pathway name" value="Metabolism of folate and pterines"/>
</dbReference>
<dbReference type="UniPathway" id="UPA00193"/>
<dbReference type="PRO" id="PR:Q17693"/>
<dbReference type="Proteomes" id="UP000001940">
    <property type="component" value="Chromosome II"/>
</dbReference>
<dbReference type="Bgee" id="WBGene00015512">
    <property type="expression patterns" value="Expressed in larva and 4 other cell types or tissues"/>
</dbReference>
<dbReference type="GO" id="GO:0071949">
    <property type="term" value="F:FAD binding"/>
    <property type="evidence" value="ECO:0000318"/>
    <property type="project" value="GO_Central"/>
</dbReference>
<dbReference type="GO" id="GO:0004489">
    <property type="term" value="F:methylenetetrahydrofolate reductase (NAD(P)H) activity"/>
    <property type="evidence" value="ECO:0000250"/>
    <property type="project" value="UniProtKB"/>
</dbReference>
<dbReference type="GO" id="GO:0106313">
    <property type="term" value="F:methylenetetrahydrofolate reductase (NADPH) activity"/>
    <property type="evidence" value="ECO:0007669"/>
    <property type="project" value="RHEA"/>
</dbReference>
<dbReference type="GO" id="GO:0009086">
    <property type="term" value="P:methionine biosynthetic process"/>
    <property type="evidence" value="ECO:0000318"/>
    <property type="project" value="GO_Central"/>
</dbReference>
<dbReference type="GO" id="GO:0035999">
    <property type="term" value="P:tetrahydrofolate interconversion"/>
    <property type="evidence" value="ECO:0000250"/>
    <property type="project" value="UniProtKB"/>
</dbReference>
<dbReference type="CDD" id="cd00537">
    <property type="entry name" value="MTHFR"/>
    <property type="match status" value="1"/>
</dbReference>
<dbReference type="FunFam" id="3.20.20.220:FF:000018">
    <property type="entry name" value="Methylenetetrahydrofolate reductase"/>
    <property type="match status" value="1"/>
</dbReference>
<dbReference type="Gene3D" id="3.20.20.220">
    <property type="match status" value="1"/>
</dbReference>
<dbReference type="InterPro" id="IPR029041">
    <property type="entry name" value="FAD-linked_oxidoreductase-like"/>
</dbReference>
<dbReference type="InterPro" id="IPR004621">
    <property type="entry name" value="Fadh2_euk"/>
</dbReference>
<dbReference type="InterPro" id="IPR003171">
    <property type="entry name" value="Mehydrof_redctse-like"/>
</dbReference>
<dbReference type="InterPro" id="IPR053806">
    <property type="entry name" value="MTHFR_C"/>
</dbReference>
<dbReference type="NCBIfam" id="TIGR00677">
    <property type="entry name" value="fadh2_euk"/>
    <property type="match status" value="1"/>
</dbReference>
<dbReference type="PANTHER" id="PTHR45754">
    <property type="entry name" value="METHYLENETETRAHYDROFOLATE REDUCTASE"/>
    <property type="match status" value="1"/>
</dbReference>
<dbReference type="PANTHER" id="PTHR45754:SF3">
    <property type="entry name" value="METHYLENETETRAHYDROFOLATE REDUCTASE (NADPH)"/>
    <property type="match status" value="1"/>
</dbReference>
<dbReference type="Pfam" id="PF02219">
    <property type="entry name" value="MTHFR"/>
    <property type="match status" value="1"/>
</dbReference>
<dbReference type="Pfam" id="PF21895">
    <property type="entry name" value="MTHFR_C"/>
    <property type="match status" value="1"/>
</dbReference>
<dbReference type="SUPFAM" id="SSF51730">
    <property type="entry name" value="FAD-linked oxidoreductase"/>
    <property type="match status" value="1"/>
</dbReference>
<gene>
    <name evidence="4" type="primary">mthf-1</name>
    <name evidence="4" type="ORF">C06A8.1</name>
</gene>
<comment type="catalytic activity">
    <reaction evidence="2">
        <text>(6S)-5-methyl-5,6,7,8-tetrahydrofolate + NADP(+) = (6R)-5,10-methylene-5,6,7,8-tetrahydrofolate + NADPH + H(+)</text>
        <dbReference type="Rhea" id="RHEA:19817"/>
        <dbReference type="ChEBI" id="CHEBI:15378"/>
        <dbReference type="ChEBI" id="CHEBI:15636"/>
        <dbReference type="ChEBI" id="CHEBI:18608"/>
        <dbReference type="ChEBI" id="CHEBI:57783"/>
        <dbReference type="ChEBI" id="CHEBI:58349"/>
        <dbReference type="EC" id="1.5.1.53"/>
    </reaction>
    <physiologicalReaction direction="right-to-left" evidence="2">
        <dbReference type="Rhea" id="RHEA:19819"/>
    </physiologicalReaction>
</comment>
<comment type="cofactor">
    <cofactor evidence="2">
        <name>FAD</name>
        <dbReference type="ChEBI" id="CHEBI:57692"/>
    </cofactor>
</comment>
<comment type="pathway">
    <text evidence="2">One-carbon metabolism; tetrahydrofolate interconversion.</text>
</comment>
<comment type="alternative products">
    <event type="alternative splicing"/>
    <isoform>
        <id>Q17693-1</id>
        <name evidence="4">a</name>
        <sequence type="displayed"/>
    </isoform>
    <isoform>
        <id>Q17693-2</id>
        <name evidence="5">b</name>
        <sequence type="described" ref="VSP_057655"/>
    </isoform>
</comment>
<comment type="similarity">
    <text evidence="3">Belongs to the methylenetetrahydrofolate reductase family.</text>
</comment>
<sequence length="663" mass="75487">MTNTGETKVIESHGTIKKIDSLSTMPYCGVETDENAVVEEKITLESGKSWSPKHYELLHERIERLIDEKQQFFSLEFFPPRFVNGVPNFLERVERLSEGGSVFVDMTWHMGSDPANVDKVTSSSSIAASMLDYCGVDTMLHMTCVQYNKADTLKHLEQAKAMGLRSILALRGDLPPGTELEDTHQFRALDMIRWIREEYGNYFSIGCAGYPLGHPQAPSYKADLMYLKAKCDAGANFVITQLFFEAETFEKFVRDCREIGITQPIIPGIMPIMGYESIKRIAKLSQLEIPQHILDDLEPIKHDDDAVQKYGTERCIEMCRRLLDNGTAPSIHLYTMNREGSIREILKSLGLWKLEGDRVFPWKNRSQHPIRCLESVRPIYWSFRPRSYITRTRDWDQFPNGRWGNSSSPAFGDVSSYYLSNLTTVRNADDRLAMFGANIESFEDVKRVFINYITQAPNADGVKVTVLPWTEAETGVQPETSLISEQLVWCNENGILTVNSQPSVNGAPSTDPLVGWGKPGGYCYQKAYLECFMTAELSDKLIQIIEREFPVRVNYHAINKDSTFDKTNSEETTPIAVTWGVFPGSEIAQPTVVDPLSFRAWRDEAYQMWMAQWGDFYPKESKSYGVIKAVHDEFRLVTLVDNDFQKPSVLFDVLQKALDELKK</sequence>
<reference key="1">
    <citation type="journal article" date="1998" name="Science">
        <title>Genome sequence of the nematode C. elegans: a platform for investigating biology.</title>
        <authorList>
            <consortium name="The C. elegans sequencing consortium"/>
        </authorList>
    </citation>
    <scope>NUCLEOTIDE SEQUENCE [LARGE SCALE GENOMIC DNA]</scope>
    <source>
        <strain>Bristol N2</strain>
    </source>
</reference>
<protein>
    <recommendedName>
        <fullName>Probable methylenetetrahydrofolate reductase (NADPH)</fullName>
        <ecNumber evidence="2">1.5.1.53</ecNumber>
    </recommendedName>
</protein>
<keyword id="KW-0025">Alternative splicing</keyword>
<keyword id="KW-0274">FAD</keyword>
<keyword id="KW-0285">Flavoprotein</keyword>
<keyword id="KW-0521">NADP</keyword>
<keyword id="KW-0560">Oxidoreductase</keyword>
<keyword id="KW-0597">Phosphoprotein</keyword>
<keyword id="KW-1185">Reference proteome</keyword>
<organism>
    <name type="scientific">Caenorhabditis elegans</name>
    <dbReference type="NCBI Taxonomy" id="6239"/>
    <lineage>
        <taxon>Eukaryota</taxon>
        <taxon>Metazoa</taxon>
        <taxon>Ecdysozoa</taxon>
        <taxon>Nematoda</taxon>
        <taxon>Chromadorea</taxon>
        <taxon>Rhabditida</taxon>
        <taxon>Rhabditina</taxon>
        <taxon>Rhabditomorpha</taxon>
        <taxon>Rhabditoidea</taxon>
        <taxon>Rhabditidae</taxon>
        <taxon>Peloderinae</taxon>
        <taxon>Caenorhabditis</taxon>
    </lineage>
</organism>